<reference key="1">
    <citation type="journal article" date="2008" name="Genome Res.">
        <title>Comparative genome analysis of Salmonella enteritidis PT4 and Salmonella gallinarum 287/91 provides insights into evolutionary and host adaptation pathways.</title>
        <authorList>
            <person name="Thomson N.R."/>
            <person name="Clayton D.J."/>
            <person name="Windhorst D."/>
            <person name="Vernikos G."/>
            <person name="Davidson S."/>
            <person name="Churcher C."/>
            <person name="Quail M.A."/>
            <person name="Stevens M."/>
            <person name="Jones M.A."/>
            <person name="Watson M."/>
            <person name="Barron A."/>
            <person name="Layton A."/>
            <person name="Pickard D."/>
            <person name="Kingsley R.A."/>
            <person name="Bignell A."/>
            <person name="Clark L."/>
            <person name="Harris B."/>
            <person name="Ormond D."/>
            <person name="Abdellah Z."/>
            <person name="Brooks K."/>
            <person name="Cherevach I."/>
            <person name="Chillingworth T."/>
            <person name="Woodward J."/>
            <person name="Norberczak H."/>
            <person name="Lord A."/>
            <person name="Arrowsmith C."/>
            <person name="Jagels K."/>
            <person name="Moule S."/>
            <person name="Mungall K."/>
            <person name="Saunders M."/>
            <person name="Whitehead S."/>
            <person name="Chabalgoity J.A."/>
            <person name="Maskell D."/>
            <person name="Humphreys T."/>
            <person name="Roberts M."/>
            <person name="Barrow P.A."/>
            <person name="Dougan G."/>
            <person name="Parkhill J."/>
        </authorList>
    </citation>
    <scope>NUCLEOTIDE SEQUENCE [LARGE SCALE GENOMIC DNA]</scope>
    <source>
        <strain>P125109</strain>
    </source>
</reference>
<protein>
    <recommendedName>
        <fullName evidence="1">Isoleucine--tRNA ligase</fullName>
        <ecNumber evidence="1">6.1.1.5</ecNumber>
    </recommendedName>
    <alternativeName>
        <fullName evidence="1">Isoleucyl-tRNA synthetase</fullName>
        <shortName evidence="1">IleRS</shortName>
    </alternativeName>
</protein>
<dbReference type="EC" id="6.1.1.5" evidence="1"/>
<dbReference type="EMBL" id="AM933172">
    <property type="protein sequence ID" value="CAR31637.1"/>
    <property type="molecule type" value="Genomic_DNA"/>
</dbReference>
<dbReference type="RefSeq" id="WP_001674865.1">
    <property type="nucleotide sequence ID" value="NC_011294.1"/>
</dbReference>
<dbReference type="SMR" id="B5R1N6"/>
<dbReference type="KEGG" id="set:SEN0046"/>
<dbReference type="HOGENOM" id="CLU_001493_7_1_6"/>
<dbReference type="Proteomes" id="UP000000613">
    <property type="component" value="Chromosome"/>
</dbReference>
<dbReference type="GO" id="GO:0005829">
    <property type="term" value="C:cytosol"/>
    <property type="evidence" value="ECO:0007669"/>
    <property type="project" value="TreeGrafter"/>
</dbReference>
<dbReference type="GO" id="GO:0002161">
    <property type="term" value="F:aminoacyl-tRNA deacylase activity"/>
    <property type="evidence" value="ECO:0007669"/>
    <property type="project" value="InterPro"/>
</dbReference>
<dbReference type="GO" id="GO:0005524">
    <property type="term" value="F:ATP binding"/>
    <property type="evidence" value="ECO:0007669"/>
    <property type="project" value="UniProtKB-UniRule"/>
</dbReference>
<dbReference type="GO" id="GO:0004822">
    <property type="term" value="F:isoleucine-tRNA ligase activity"/>
    <property type="evidence" value="ECO:0007669"/>
    <property type="project" value="UniProtKB-UniRule"/>
</dbReference>
<dbReference type="GO" id="GO:0000049">
    <property type="term" value="F:tRNA binding"/>
    <property type="evidence" value="ECO:0007669"/>
    <property type="project" value="InterPro"/>
</dbReference>
<dbReference type="GO" id="GO:0008270">
    <property type="term" value="F:zinc ion binding"/>
    <property type="evidence" value="ECO:0007669"/>
    <property type="project" value="UniProtKB-UniRule"/>
</dbReference>
<dbReference type="GO" id="GO:0006428">
    <property type="term" value="P:isoleucyl-tRNA aminoacylation"/>
    <property type="evidence" value="ECO:0007669"/>
    <property type="project" value="UniProtKB-UniRule"/>
</dbReference>
<dbReference type="CDD" id="cd07960">
    <property type="entry name" value="Anticodon_Ia_Ile_BEm"/>
    <property type="match status" value="1"/>
</dbReference>
<dbReference type="CDD" id="cd00818">
    <property type="entry name" value="IleRS_core"/>
    <property type="match status" value="1"/>
</dbReference>
<dbReference type="FunFam" id="1.10.730.20:FF:000001">
    <property type="entry name" value="Isoleucine--tRNA ligase"/>
    <property type="match status" value="1"/>
</dbReference>
<dbReference type="FunFam" id="3.40.50.620:FF:000042">
    <property type="entry name" value="Isoleucine--tRNA ligase"/>
    <property type="match status" value="1"/>
</dbReference>
<dbReference type="FunFam" id="3.40.50.620:FF:000048">
    <property type="entry name" value="Isoleucine--tRNA ligase"/>
    <property type="match status" value="1"/>
</dbReference>
<dbReference type="FunFam" id="3.90.740.10:FF:000002">
    <property type="entry name" value="Isoleucine--tRNA ligase"/>
    <property type="match status" value="1"/>
</dbReference>
<dbReference type="Gene3D" id="1.10.730.20">
    <property type="match status" value="1"/>
</dbReference>
<dbReference type="Gene3D" id="3.40.50.620">
    <property type="entry name" value="HUPs"/>
    <property type="match status" value="2"/>
</dbReference>
<dbReference type="Gene3D" id="3.90.740.10">
    <property type="entry name" value="Valyl/Leucyl/Isoleucyl-tRNA synthetase, editing domain"/>
    <property type="match status" value="1"/>
</dbReference>
<dbReference type="HAMAP" id="MF_02002">
    <property type="entry name" value="Ile_tRNA_synth_type1"/>
    <property type="match status" value="1"/>
</dbReference>
<dbReference type="InterPro" id="IPR001412">
    <property type="entry name" value="aa-tRNA-synth_I_CS"/>
</dbReference>
<dbReference type="InterPro" id="IPR002300">
    <property type="entry name" value="aa-tRNA-synth_Ia"/>
</dbReference>
<dbReference type="InterPro" id="IPR033708">
    <property type="entry name" value="Anticodon_Ile_BEm"/>
</dbReference>
<dbReference type="InterPro" id="IPR002301">
    <property type="entry name" value="Ile-tRNA-ligase"/>
</dbReference>
<dbReference type="InterPro" id="IPR023585">
    <property type="entry name" value="Ile-tRNA-ligase_type1"/>
</dbReference>
<dbReference type="InterPro" id="IPR050081">
    <property type="entry name" value="Ile-tRNA_ligase"/>
</dbReference>
<dbReference type="InterPro" id="IPR013155">
    <property type="entry name" value="M/V/L/I-tRNA-synth_anticd-bd"/>
</dbReference>
<dbReference type="InterPro" id="IPR014729">
    <property type="entry name" value="Rossmann-like_a/b/a_fold"/>
</dbReference>
<dbReference type="InterPro" id="IPR009080">
    <property type="entry name" value="tRNAsynth_Ia_anticodon-bd"/>
</dbReference>
<dbReference type="InterPro" id="IPR009008">
    <property type="entry name" value="Val/Leu/Ile-tRNA-synth_edit"/>
</dbReference>
<dbReference type="InterPro" id="IPR010663">
    <property type="entry name" value="Znf_FPG/IleRS"/>
</dbReference>
<dbReference type="NCBIfam" id="TIGR00392">
    <property type="entry name" value="ileS"/>
    <property type="match status" value="1"/>
</dbReference>
<dbReference type="PANTHER" id="PTHR42765:SF1">
    <property type="entry name" value="ISOLEUCINE--TRNA LIGASE, MITOCHONDRIAL"/>
    <property type="match status" value="1"/>
</dbReference>
<dbReference type="PANTHER" id="PTHR42765">
    <property type="entry name" value="SOLEUCYL-TRNA SYNTHETASE"/>
    <property type="match status" value="1"/>
</dbReference>
<dbReference type="Pfam" id="PF08264">
    <property type="entry name" value="Anticodon_1"/>
    <property type="match status" value="1"/>
</dbReference>
<dbReference type="Pfam" id="PF00133">
    <property type="entry name" value="tRNA-synt_1"/>
    <property type="match status" value="1"/>
</dbReference>
<dbReference type="Pfam" id="PF06827">
    <property type="entry name" value="zf-FPG_IleRS"/>
    <property type="match status" value="1"/>
</dbReference>
<dbReference type="PRINTS" id="PR00984">
    <property type="entry name" value="TRNASYNTHILE"/>
</dbReference>
<dbReference type="SUPFAM" id="SSF47323">
    <property type="entry name" value="Anticodon-binding domain of a subclass of class I aminoacyl-tRNA synthetases"/>
    <property type="match status" value="1"/>
</dbReference>
<dbReference type="SUPFAM" id="SSF52374">
    <property type="entry name" value="Nucleotidylyl transferase"/>
    <property type="match status" value="1"/>
</dbReference>
<dbReference type="SUPFAM" id="SSF50677">
    <property type="entry name" value="ValRS/IleRS/LeuRS editing domain"/>
    <property type="match status" value="1"/>
</dbReference>
<dbReference type="PROSITE" id="PS00178">
    <property type="entry name" value="AA_TRNA_LIGASE_I"/>
    <property type="match status" value="1"/>
</dbReference>
<comment type="function">
    <text evidence="1">Catalyzes the attachment of isoleucine to tRNA(Ile). As IleRS can inadvertently accommodate and process structurally similar amino acids such as valine, to avoid such errors it has two additional distinct tRNA(Ile)-dependent editing activities. One activity is designated as 'pretransfer' editing and involves the hydrolysis of activated Val-AMP. The other activity is designated 'posttransfer' editing and involves deacylation of mischarged Val-tRNA(Ile).</text>
</comment>
<comment type="catalytic activity">
    <reaction evidence="1">
        <text>tRNA(Ile) + L-isoleucine + ATP = L-isoleucyl-tRNA(Ile) + AMP + diphosphate</text>
        <dbReference type="Rhea" id="RHEA:11060"/>
        <dbReference type="Rhea" id="RHEA-COMP:9666"/>
        <dbReference type="Rhea" id="RHEA-COMP:9695"/>
        <dbReference type="ChEBI" id="CHEBI:30616"/>
        <dbReference type="ChEBI" id="CHEBI:33019"/>
        <dbReference type="ChEBI" id="CHEBI:58045"/>
        <dbReference type="ChEBI" id="CHEBI:78442"/>
        <dbReference type="ChEBI" id="CHEBI:78528"/>
        <dbReference type="ChEBI" id="CHEBI:456215"/>
        <dbReference type="EC" id="6.1.1.5"/>
    </reaction>
</comment>
<comment type="cofactor">
    <cofactor evidence="1">
        <name>Zn(2+)</name>
        <dbReference type="ChEBI" id="CHEBI:29105"/>
    </cofactor>
    <text evidence="1">Binds 1 zinc ion per subunit.</text>
</comment>
<comment type="subunit">
    <text evidence="1">Monomer.</text>
</comment>
<comment type="subcellular location">
    <subcellularLocation>
        <location evidence="1">Cytoplasm</location>
    </subcellularLocation>
</comment>
<comment type="domain">
    <text evidence="1">IleRS has two distinct active sites: one for aminoacylation and one for editing. The misactivated valine is translocated from the active site to the editing site, which sterically excludes the correctly activated isoleucine. The single editing site contains two valyl binding pockets, one specific for each substrate (Val-AMP or Val-tRNA(Ile)).</text>
</comment>
<comment type="similarity">
    <text evidence="1">Belongs to the class-I aminoacyl-tRNA synthetase family. IleS type 1 subfamily.</text>
</comment>
<proteinExistence type="inferred from homology"/>
<keyword id="KW-0030">Aminoacyl-tRNA synthetase</keyword>
<keyword id="KW-0067">ATP-binding</keyword>
<keyword id="KW-0963">Cytoplasm</keyword>
<keyword id="KW-0436">Ligase</keyword>
<keyword id="KW-0479">Metal-binding</keyword>
<keyword id="KW-0547">Nucleotide-binding</keyword>
<keyword id="KW-0648">Protein biosynthesis</keyword>
<keyword id="KW-0862">Zinc</keyword>
<gene>
    <name evidence="1" type="primary">ileS</name>
    <name type="ordered locus">SEN0046</name>
</gene>
<name>SYI_SALEP</name>
<evidence type="ECO:0000255" key="1">
    <source>
        <dbReference type="HAMAP-Rule" id="MF_02002"/>
    </source>
</evidence>
<sequence>MSDYKSTLNLPETGFPMRGDLAKREPGMLARWTDDDLYGIIRAAKKGKKTFILHDGPPYANGSIHIGHSVNKILKDIIVKSKGLSGFDSPYVPGWDCHGLPIELKVEQEFGKPGEKFTAAEFRAKCREYAATQVDGQRKDFIRLGVLGDWSHPYLTMDFKTEANIIRALGRIIKNGHLHKGAKPVHWCVDCRSALAEAEVEYYDKTSPSIDVAFRAVDQDAVKAKFGLPGVSGPVSLVIWTTTPWTLPANRAISLAPDFDYALVQIDGQAVILAKDLVESVMQRIGAAEYTILGTVKGAELELLRFTHPFMGFDVPAILGDHVTLDAGTGAVHTAPGHGPDDYVIGQKYGLETANPVGPDGAYLPGTYPTLDGVNVFKANDIVIELLKEKGALLHVEKMQHSYPCCWRHKTPIIFRATPQWFVSMDKEGLRQQSLKEIKGVQWIPDWGQARIESMVANRPDWCISRQRTWGVPMSLFVHKETQELLPIERTLAAMEEVAKRVEVDGIQAWWDLDPKEILGEDADQYEKVPDTLDVWFDSGSTSYSVVDARPEFAGHAADMYLEGSDQHRGWFMSSLMISVAMKGKAPYRQVLTHGFTVDGQGRKMSKSIGNTVSPQDVMNKLGADILRLWVASTDYTGEMAVSDEILKRAADSYRRIRNTARFLLANLNGFNPATDMVKPEEMVVLDRWAVGCAKTAQQEILKAYEAYDFHEVVQRLMRFCSVEMGSFYLDIIKDRQYTAKADSVARRSCQTALYHIAEALVRWMAPIMSFTADEIWGYLPGEREKYVFTGEWYDGLFGLEENEEFNDAFWDDVRYIKDQVNKELENQKANGIKSNLEAKVTLKYADDANGTIKKLKLLGEEVRFIFITSQFVISEQAGGIDDENIQYNAGNTTVQAVVTRAEGDKCPRCWHYTTDVGKVAEHADICGRCVSNIAGNGEQRKFA</sequence>
<accession>B5R1N6</accession>
<feature type="chain" id="PRO_1000189191" description="Isoleucine--tRNA ligase">
    <location>
        <begin position="1"/>
        <end position="944"/>
    </location>
</feature>
<feature type="short sequence motif" description="'HIGH' region">
    <location>
        <begin position="58"/>
        <end position="68"/>
    </location>
</feature>
<feature type="short sequence motif" description="'KMSKS' region">
    <location>
        <begin position="604"/>
        <end position="608"/>
    </location>
</feature>
<feature type="binding site" evidence="1">
    <location>
        <position position="563"/>
    </location>
    <ligand>
        <name>L-isoleucyl-5'-AMP</name>
        <dbReference type="ChEBI" id="CHEBI:178002"/>
    </ligand>
</feature>
<feature type="binding site" evidence="1">
    <location>
        <position position="607"/>
    </location>
    <ligand>
        <name>ATP</name>
        <dbReference type="ChEBI" id="CHEBI:30616"/>
    </ligand>
</feature>
<feature type="binding site" evidence="1">
    <location>
        <position position="907"/>
    </location>
    <ligand>
        <name>Zn(2+)</name>
        <dbReference type="ChEBI" id="CHEBI:29105"/>
    </ligand>
</feature>
<feature type="binding site" evidence="1">
    <location>
        <position position="910"/>
    </location>
    <ligand>
        <name>Zn(2+)</name>
        <dbReference type="ChEBI" id="CHEBI:29105"/>
    </ligand>
</feature>
<feature type="binding site" evidence="1">
    <location>
        <position position="927"/>
    </location>
    <ligand>
        <name>Zn(2+)</name>
        <dbReference type="ChEBI" id="CHEBI:29105"/>
    </ligand>
</feature>
<feature type="binding site" evidence="1">
    <location>
        <position position="930"/>
    </location>
    <ligand>
        <name>Zn(2+)</name>
        <dbReference type="ChEBI" id="CHEBI:29105"/>
    </ligand>
</feature>
<organism>
    <name type="scientific">Salmonella enteritidis PT4 (strain P125109)</name>
    <dbReference type="NCBI Taxonomy" id="550537"/>
    <lineage>
        <taxon>Bacteria</taxon>
        <taxon>Pseudomonadati</taxon>
        <taxon>Pseudomonadota</taxon>
        <taxon>Gammaproteobacteria</taxon>
        <taxon>Enterobacterales</taxon>
        <taxon>Enterobacteriaceae</taxon>
        <taxon>Salmonella</taxon>
    </lineage>
</organism>